<feature type="chain" id="PRO_1000064851" description="UPF0283 membrane protein YcjF">
    <location>
        <begin position="1"/>
        <end position="344"/>
    </location>
</feature>
<feature type="transmembrane region" description="Helical" evidence="1">
    <location>
        <begin position="70"/>
        <end position="90"/>
    </location>
</feature>
<feature type="transmembrane region" description="Helical" evidence="1">
    <location>
        <begin position="100"/>
        <end position="120"/>
    </location>
</feature>
<feature type="transmembrane region" description="Helical" evidence="1">
    <location>
        <begin position="213"/>
        <end position="233"/>
    </location>
</feature>
<dbReference type="EMBL" id="CP000034">
    <property type="protein sequence ID" value="ABB61544.1"/>
    <property type="molecule type" value="Genomic_DNA"/>
</dbReference>
<dbReference type="RefSeq" id="WP_000138724.1">
    <property type="nucleotide sequence ID" value="NC_007606.1"/>
</dbReference>
<dbReference type="RefSeq" id="YP_403035.1">
    <property type="nucleotide sequence ID" value="NC_007606.1"/>
</dbReference>
<dbReference type="STRING" id="300267.SDY_1400"/>
<dbReference type="EnsemblBacteria" id="ABB61544">
    <property type="protein sequence ID" value="ABB61544"/>
    <property type="gene ID" value="SDY_1400"/>
</dbReference>
<dbReference type="KEGG" id="sdy:SDY_1400"/>
<dbReference type="PATRIC" id="fig|300267.13.peg.1661"/>
<dbReference type="HOGENOM" id="CLU_057693_2_0_6"/>
<dbReference type="Proteomes" id="UP000002716">
    <property type="component" value="Chromosome"/>
</dbReference>
<dbReference type="GO" id="GO:0005886">
    <property type="term" value="C:plasma membrane"/>
    <property type="evidence" value="ECO:0007669"/>
    <property type="project" value="UniProtKB-SubCell"/>
</dbReference>
<dbReference type="HAMAP" id="MF_01085">
    <property type="entry name" value="UPF0283"/>
    <property type="match status" value="1"/>
</dbReference>
<dbReference type="InterPro" id="IPR021147">
    <property type="entry name" value="DUF697"/>
</dbReference>
<dbReference type="InterPro" id="IPR006507">
    <property type="entry name" value="UPF0283"/>
</dbReference>
<dbReference type="NCBIfam" id="TIGR01620">
    <property type="entry name" value="hyp_HI0043"/>
    <property type="match status" value="1"/>
</dbReference>
<dbReference type="PANTHER" id="PTHR39342">
    <property type="entry name" value="UPF0283 MEMBRANE PROTEIN YCJF"/>
    <property type="match status" value="1"/>
</dbReference>
<dbReference type="PANTHER" id="PTHR39342:SF1">
    <property type="entry name" value="UPF0283 MEMBRANE PROTEIN YCJF"/>
    <property type="match status" value="1"/>
</dbReference>
<dbReference type="Pfam" id="PF05128">
    <property type="entry name" value="DUF697"/>
    <property type="match status" value="1"/>
</dbReference>
<comment type="subcellular location">
    <subcellularLocation>
        <location evidence="1">Cell inner membrane</location>
        <topology evidence="1">Multi-pass membrane protein</topology>
    </subcellularLocation>
</comment>
<comment type="similarity">
    <text evidence="1">Belongs to the UPF0283 family.</text>
</comment>
<sequence>MTEPLKPRIDFDGPLEVDQNPKFRAQQTFDENQAQNFAPATLDEAQEEEGQVEAVMDAALRPKRSLWRKMVMGGLALFGASVVGQGVQWTMNACQTQDWVALGGCAAGALIIGAGVGSVVTEWRRLWRLRQRAHERDEARDLLHSHGTGKGRVFCEKLAQQAGIDQSHPALQRWYASIHETQNDREVVSLYAHLVQPVLDAQARREISRSAAESTLMIAVSPLALVDMAFIAWRNLRLINRIATLYGIELGYYSRLRLFKLVLLNIAFAGASELVREVGMDWMSQDLAARLSTRAAQGIGAGLLTARLGIKAMELCRPLPWIDDDKPRLGDFRRQLIGQVKETL</sequence>
<keyword id="KW-0997">Cell inner membrane</keyword>
<keyword id="KW-1003">Cell membrane</keyword>
<keyword id="KW-0472">Membrane</keyword>
<keyword id="KW-1185">Reference proteome</keyword>
<keyword id="KW-0812">Transmembrane</keyword>
<keyword id="KW-1133">Transmembrane helix</keyword>
<proteinExistence type="inferred from homology"/>
<name>YCJF_SHIDS</name>
<evidence type="ECO:0000255" key="1">
    <source>
        <dbReference type="HAMAP-Rule" id="MF_01085"/>
    </source>
</evidence>
<protein>
    <recommendedName>
        <fullName evidence="1">UPF0283 membrane protein YcjF</fullName>
    </recommendedName>
</protein>
<gene>
    <name evidence="1" type="primary">ycjF</name>
    <name type="ordered locus">SDY_1400</name>
</gene>
<reference key="1">
    <citation type="journal article" date="2005" name="Nucleic Acids Res.">
        <title>Genome dynamics and diversity of Shigella species, the etiologic agents of bacillary dysentery.</title>
        <authorList>
            <person name="Yang F."/>
            <person name="Yang J."/>
            <person name="Zhang X."/>
            <person name="Chen L."/>
            <person name="Jiang Y."/>
            <person name="Yan Y."/>
            <person name="Tang X."/>
            <person name="Wang J."/>
            <person name="Xiong Z."/>
            <person name="Dong J."/>
            <person name="Xue Y."/>
            <person name="Zhu Y."/>
            <person name="Xu X."/>
            <person name="Sun L."/>
            <person name="Chen S."/>
            <person name="Nie H."/>
            <person name="Peng J."/>
            <person name="Xu J."/>
            <person name="Wang Y."/>
            <person name="Yuan Z."/>
            <person name="Wen Y."/>
            <person name="Yao Z."/>
            <person name="Shen Y."/>
            <person name="Qiang B."/>
            <person name="Hou Y."/>
            <person name="Yu J."/>
            <person name="Jin Q."/>
        </authorList>
    </citation>
    <scope>NUCLEOTIDE SEQUENCE [LARGE SCALE GENOMIC DNA]</scope>
    <source>
        <strain>Sd197</strain>
    </source>
</reference>
<organism>
    <name type="scientific">Shigella dysenteriae serotype 1 (strain Sd197)</name>
    <dbReference type="NCBI Taxonomy" id="300267"/>
    <lineage>
        <taxon>Bacteria</taxon>
        <taxon>Pseudomonadati</taxon>
        <taxon>Pseudomonadota</taxon>
        <taxon>Gammaproteobacteria</taxon>
        <taxon>Enterobacterales</taxon>
        <taxon>Enterobacteriaceae</taxon>
        <taxon>Shigella</taxon>
    </lineage>
</organism>
<accession>Q32GL1</accession>